<evidence type="ECO:0000256" key="1">
    <source>
        <dbReference type="SAM" id="MobiDB-lite"/>
    </source>
</evidence>
<protein>
    <recommendedName>
        <fullName>Putative ankyrin repeat protein RF_1081</fullName>
    </recommendedName>
</protein>
<keyword id="KW-0040">ANK repeat</keyword>
<accession>Q4UKJ5</accession>
<name>Y1081_RICFE</name>
<gene>
    <name type="ordered locus">RF_1081</name>
</gene>
<reference key="1">
    <citation type="journal article" date="2005" name="PLoS Biol.">
        <title>The genome sequence of Rickettsia felis identifies the first putative conjugative plasmid in an obligate intracellular parasite.</title>
        <authorList>
            <person name="Ogata H."/>
            <person name="Renesto P."/>
            <person name="Audic S."/>
            <person name="Robert C."/>
            <person name="Blanc G."/>
            <person name="Fournier P.-E."/>
            <person name="Parinello H."/>
            <person name="Claverie J.-M."/>
            <person name="Raoult D."/>
        </authorList>
    </citation>
    <scope>NUCLEOTIDE SEQUENCE [LARGE SCALE GENOMIC DNA]</scope>
    <source>
        <strain>ATCC VR-1525 / URRWXCal2</strain>
    </source>
</reference>
<dbReference type="EMBL" id="CP000053">
    <property type="protein sequence ID" value="AAY61932.1"/>
    <property type="molecule type" value="Genomic_DNA"/>
</dbReference>
<dbReference type="SMR" id="Q4UKJ5"/>
<dbReference type="KEGG" id="rfe:RF_1081"/>
<dbReference type="HOGENOM" id="CLU_112043_0_0_5"/>
<dbReference type="Proteomes" id="UP000008548">
    <property type="component" value="Chromosome"/>
</dbReference>
<dbReference type="Gene3D" id="1.25.40.20">
    <property type="entry name" value="Ankyrin repeat-containing domain"/>
    <property type="match status" value="1"/>
</dbReference>
<dbReference type="InterPro" id="IPR002110">
    <property type="entry name" value="Ankyrin_rpt"/>
</dbReference>
<dbReference type="InterPro" id="IPR036770">
    <property type="entry name" value="Ankyrin_rpt-contain_sf"/>
</dbReference>
<dbReference type="Pfam" id="PF12796">
    <property type="entry name" value="Ank_2"/>
    <property type="match status" value="1"/>
</dbReference>
<dbReference type="SUPFAM" id="SSF48403">
    <property type="entry name" value="Ankyrin repeat"/>
    <property type="match status" value="1"/>
</dbReference>
<dbReference type="PROSITE" id="PS50297">
    <property type="entry name" value="ANK_REP_REGION"/>
    <property type="match status" value="1"/>
</dbReference>
<proteinExistence type="predicted"/>
<feature type="chain" id="PRO_0000281758" description="Putative ankyrin repeat protein RF_1081">
    <location>
        <begin position="1"/>
        <end position="214"/>
    </location>
</feature>
<feature type="repeat" description="ANK">
    <location>
        <begin position="67"/>
        <end position="135"/>
    </location>
</feature>
<feature type="region of interest" description="Disordered" evidence="1">
    <location>
        <begin position="1"/>
        <end position="32"/>
    </location>
</feature>
<feature type="compositionally biased region" description="Polar residues" evidence="1">
    <location>
        <begin position="1"/>
        <end position="14"/>
    </location>
</feature>
<organism>
    <name type="scientific">Rickettsia felis (strain ATCC VR-1525 / URRWXCal2)</name>
    <name type="common">Rickettsia azadi</name>
    <dbReference type="NCBI Taxonomy" id="315456"/>
    <lineage>
        <taxon>Bacteria</taxon>
        <taxon>Pseudomonadati</taxon>
        <taxon>Pseudomonadota</taxon>
        <taxon>Alphaproteobacteria</taxon>
        <taxon>Rickettsiales</taxon>
        <taxon>Rickettsiaceae</taxon>
        <taxon>Rickettsieae</taxon>
        <taxon>Rickettsia</taxon>
        <taxon>spotted fever group</taxon>
    </lineage>
</organism>
<sequence>MRKQQIPTLSTSALDKSPGPGSPDSDIEMKSTSVKSDIDELAKLLKDKTKDGIAIFNSALKVCIENNPNALLHEAAEHGKKKLVVEILKVNRDSINSTTPQGLSVLHSAVAGVNNKKEIIEILLNEEPILVTKKDALGLTPSCYNTSTEILKILQEYERNVIDQALIKPAKYVPITPPKCLPIEVVQSNLEKAFEEYMGYKLVGQTNPTNSDEF</sequence>